<keyword id="KW-0963">Cytoplasm</keyword>
<keyword id="KW-0489">Methyltransferase</keyword>
<keyword id="KW-1185">Reference proteome</keyword>
<keyword id="KW-0949">S-adenosyl-L-methionine</keyword>
<keyword id="KW-0808">Transferase</keyword>
<keyword id="KW-0819">tRNA processing</keyword>
<organism>
    <name type="scientific">Oceanobacillus iheyensis (strain DSM 14371 / CIP 107618 / JCM 11309 / KCTC 3954 / HTE831)</name>
    <dbReference type="NCBI Taxonomy" id="221109"/>
    <lineage>
        <taxon>Bacteria</taxon>
        <taxon>Bacillati</taxon>
        <taxon>Bacillota</taxon>
        <taxon>Bacilli</taxon>
        <taxon>Bacillales</taxon>
        <taxon>Bacillaceae</taxon>
        <taxon>Oceanobacillus</taxon>
    </lineage>
</organism>
<sequence>MHIDILTLFPEMFHGVFQSSILNKAVERQQFTYDLVNFREYSKNKHQKVDDYPYGGGAGMVLTPQPIFDAVEAVKSKRNSKPRVILMCPQGETLTQQKSEELAKEDHLIFICGHYEGYDERIREHIVTDEISIGDYVLTGGELGSMVVVDSVVRLLPDVLGNQQSAPQDSFSTGLLEHPHYTRPADFRGYKVPEVLLSGNHANIDSWRRKQSLIRTWNRRRDLLDKIELTDEEKITLNTDTPDEV</sequence>
<proteinExistence type="inferred from homology"/>
<evidence type="ECO:0000255" key="1">
    <source>
        <dbReference type="HAMAP-Rule" id="MF_00605"/>
    </source>
</evidence>
<feature type="chain" id="PRO_0000060424" description="tRNA (guanine-N(1)-)-methyltransferase">
    <location>
        <begin position="1"/>
        <end position="245"/>
    </location>
</feature>
<feature type="binding site" evidence="1">
    <location>
        <position position="113"/>
    </location>
    <ligand>
        <name>S-adenosyl-L-methionine</name>
        <dbReference type="ChEBI" id="CHEBI:59789"/>
    </ligand>
</feature>
<feature type="binding site" evidence="1">
    <location>
        <begin position="133"/>
        <end position="138"/>
    </location>
    <ligand>
        <name>S-adenosyl-L-methionine</name>
        <dbReference type="ChEBI" id="CHEBI:59789"/>
    </ligand>
</feature>
<gene>
    <name evidence="1" type="primary">trmD</name>
    <name type="ordered locus">OB1536</name>
</gene>
<protein>
    <recommendedName>
        <fullName evidence="1">tRNA (guanine-N(1)-)-methyltransferase</fullName>
        <ecNumber evidence="1">2.1.1.228</ecNumber>
    </recommendedName>
    <alternativeName>
        <fullName evidence="1">M1G-methyltransferase</fullName>
    </alternativeName>
    <alternativeName>
        <fullName evidence="1">tRNA [GM37] methyltransferase</fullName>
    </alternativeName>
</protein>
<name>TRMD_OCEIH</name>
<accession>Q8CXH3</accession>
<comment type="function">
    <text evidence="1">Specifically methylates guanosine-37 in various tRNAs.</text>
</comment>
<comment type="catalytic activity">
    <reaction evidence="1">
        <text>guanosine(37) in tRNA + S-adenosyl-L-methionine = N(1)-methylguanosine(37) in tRNA + S-adenosyl-L-homocysteine + H(+)</text>
        <dbReference type="Rhea" id="RHEA:36899"/>
        <dbReference type="Rhea" id="RHEA-COMP:10145"/>
        <dbReference type="Rhea" id="RHEA-COMP:10147"/>
        <dbReference type="ChEBI" id="CHEBI:15378"/>
        <dbReference type="ChEBI" id="CHEBI:57856"/>
        <dbReference type="ChEBI" id="CHEBI:59789"/>
        <dbReference type="ChEBI" id="CHEBI:73542"/>
        <dbReference type="ChEBI" id="CHEBI:74269"/>
        <dbReference type="EC" id="2.1.1.228"/>
    </reaction>
</comment>
<comment type="subunit">
    <text evidence="1">Homodimer.</text>
</comment>
<comment type="subcellular location">
    <subcellularLocation>
        <location evidence="1">Cytoplasm</location>
    </subcellularLocation>
</comment>
<comment type="similarity">
    <text evidence="1">Belongs to the RNA methyltransferase TrmD family.</text>
</comment>
<reference key="1">
    <citation type="journal article" date="2002" name="Nucleic Acids Res.">
        <title>Genome sequence of Oceanobacillus iheyensis isolated from the Iheya Ridge and its unexpected adaptive capabilities to extreme environments.</title>
        <authorList>
            <person name="Takami H."/>
            <person name="Takaki Y."/>
            <person name="Uchiyama I."/>
        </authorList>
    </citation>
    <scope>NUCLEOTIDE SEQUENCE [LARGE SCALE GENOMIC DNA]</scope>
    <source>
        <strain>DSM 14371 / CIP 107618 / JCM 11309 / KCTC 3954 / HTE831</strain>
    </source>
</reference>
<dbReference type="EC" id="2.1.1.228" evidence="1"/>
<dbReference type="EMBL" id="BA000028">
    <property type="protein sequence ID" value="BAC13492.1"/>
    <property type="molecule type" value="Genomic_DNA"/>
</dbReference>
<dbReference type="RefSeq" id="WP_011065936.1">
    <property type="nucleotide sequence ID" value="NC_004193.1"/>
</dbReference>
<dbReference type="SMR" id="Q8CXH3"/>
<dbReference type="STRING" id="221109.gene:10733776"/>
<dbReference type="KEGG" id="oih:OB1536"/>
<dbReference type="eggNOG" id="COG0336">
    <property type="taxonomic scope" value="Bacteria"/>
</dbReference>
<dbReference type="HOGENOM" id="CLU_047363_0_1_9"/>
<dbReference type="OrthoDB" id="9807416at2"/>
<dbReference type="PhylomeDB" id="Q8CXH3"/>
<dbReference type="Proteomes" id="UP000000822">
    <property type="component" value="Chromosome"/>
</dbReference>
<dbReference type="GO" id="GO:0005829">
    <property type="term" value="C:cytosol"/>
    <property type="evidence" value="ECO:0007669"/>
    <property type="project" value="TreeGrafter"/>
</dbReference>
<dbReference type="GO" id="GO:0052906">
    <property type="term" value="F:tRNA (guanine(37)-N1)-methyltransferase activity"/>
    <property type="evidence" value="ECO:0007669"/>
    <property type="project" value="UniProtKB-UniRule"/>
</dbReference>
<dbReference type="GO" id="GO:0002939">
    <property type="term" value="P:tRNA N1-guanine methylation"/>
    <property type="evidence" value="ECO:0007669"/>
    <property type="project" value="TreeGrafter"/>
</dbReference>
<dbReference type="CDD" id="cd18080">
    <property type="entry name" value="TrmD-like"/>
    <property type="match status" value="1"/>
</dbReference>
<dbReference type="FunFam" id="1.10.1270.20:FF:000001">
    <property type="entry name" value="tRNA (guanine-N(1)-)-methyltransferase"/>
    <property type="match status" value="1"/>
</dbReference>
<dbReference type="FunFam" id="3.40.1280.10:FF:000001">
    <property type="entry name" value="tRNA (guanine-N(1)-)-methyltransferase"/>
    <property type="match status" value="1"/>
</dbReference>
<dbReference type="Gene3D" id="3.40.1280.10">
    <property type="match status" value="1"/>
</dbReference>
<dbReference type="Gene3D" id="1.10.1270.20">
    <property type="entry name" value="tRNA(m1g37)methyltransferase, domain 2"/>
    <property type="match status" value="1"/>
</dbReference>
<dbReference type="HAMAP" id="MF_00605">
    <property type="entry name" value="TrmD"/>
    <property type="match status" value="1"/>
</dbReference>
<dbReference type="InterPro" id="IPR029028">
    <property type="entry name" value="Alpha/beta_knot_MTases"/>
</dbReference>
<dbReference type="InterPro" id="IPR023148">
    <property type="entry name" value="tRNA_m1G_MeTrfase_C_sf"/>
</dbReference>
<dbReference type="InterPro" id="IPR002649">
    <property type="entry name" value="tRNA_m1G_MeTrfase_TrmD"/>
</dbReference>
<dbReference type="InterPro" id="IPR029026">
    <property type="entry name" value="tRNA_m1G_MTases_N"/>
</dbReference>
<dbReference type="InterPro" id="IPR016009">
    <property type="entry name" value="tRNA_MeTrfase_TRMD/TRM10"/>
</dbReference>
<dbReference type="NCBIfam" id="NF000648">
    <property type="entry name" value="PRK00026.1"/>
    <property type="match status" value="1"/>
</dbReference>
<dbReference type="NCBIfam" id="TIGR00088">
    <property type="entry name" value="trmD"/>
    <property type="match status" value="1"/>
</dbReference>
<dbReference type="PANTHER" id="PTHR46417">
    <property type="entry name" value="TRNA (GUANINE-N(1)-)-METHYLTRANSFERASE"/>
    <property type="match status" value="1"/>
</dbReference>
<dbReference type="PANTHER" id="PTHR46417:SF1">
    <property type="entry name" value="TRNA (GUANINE-N(1)-)-METHYLTRANSFERASE"/>
    <property type="match status" value="1"/>
</dbReference>
<dbReference type="Pfam" id="PF01746">
    <property type="entry name" value="tRNA_m1G_MT"/>
    <property type="match status" value="1"/>
</dbReference>
<dbReference type="PIRSF" id="PIRSF000386">
    <property type="entry name" value="tRNA_mtase"/>
    <property type="match status" value="1"/>
</dbReference>
<dbReference type="SUPFAM" id="SSF75217">
    <property type="entry name" value="alpha/beta knot"/>
    <property type="match status" value="1"/>
</dbReference>